<sequence>MSEQLLTASTPIDAAPLSDNTVQTTAPATSKINLLDLNRQQMREFFAEMGEKPFRADQVMKWMYHYCYDDFEQMTDINKGLRAKLQRVAEIRAPEVAEEQRSVDGTIKWAIKVGDQQVETVYIPEADRATLCVSSQVGCALECKFCSTAQQGFNRNLRVSEIIGQVWRAAKIIGSLKSTGTRPITNVVMMGMGEPLLNLNNVVPAMDIMMDDFGFGLSKRRVTLSTSGVVPALDKLGDMIDVALAISLHAPTDDIRDEIVPINRKYNIETFLAAVRRYLDKSKANGGRVTVEYVMLDHINDSTEQAHQLAECLKDTPCKINLIPWNPFPGAPYGRSSNSRVDRFSKVLMEYGFTTIVRKTRGDDIDAACGQLAGEVIDRTKRTLKKKMAGEPIAIKTV</sequence>
<dbReference type="EC" id="2.1.1.192" evidence="1"/>
<dbReference type="EMBL" id="CP000308">
    <property type="protein sequence ID" value="ABG14287.1"/>
    <property type="molecule type" value="Genomic_DNA"/>
</dbReference>
<dbReference type="RefSeq" id="WP_002209820.1">
    <property type="nucleotide sequence ID" value="NZ_CP009906.1"/>
</dbReference>
<dbReference type="SMR" id="Q1C5I5"/>
<dbReference type="KEGG" id="ypa:YPA_2322"/>
<dbReference type="Proteomes" id="UP000001971">
    <property type="component" value="Chromosome"/>
</dbReference>
<dbReference type="GO" id="GO:0005737">
    <property type="term" value="C:cytoplasm"/>
    <property type="evidence" value="ECO:0007669"/>
    <property type="project" value="UniProtKB-SubCell"/>
</dbReference>
<dbReference type="GO" id="GO:0051539">
    <property type="term" value="F:4 iron, 4 sulfur cluster binding"/>
    <property type="evidence" value="ECO:0007669"/>
    <property type="project" value="UniProtKB-UniRule"/>
</dbReference>
<dbReference type="GO" id="GO:0046872">
    <property type="term" value="F:metal ion binding"/>
    <property type="evidence" value="ECO:0007669"/>
    <property type="project" value="UniProtKB-KW"/>
</dbReference>
<dbReference type="GO" id="GO:0070040">
    <property type="term" value="F:rRNA (adenine(2503)-C2-)-methyltransferase activity"/>
    <property type="evidence" value="ECO:0007669"/>
    <property type="project" value="UniProtKB-UniRule"/>
</dbReference>
<dbReference type="GO" id="GO:0019843">
    <property type="term" value="F:rRNA binding"/>
    <property type="evidence" value="ECO:0007669"/>
    <property type="project" value="UniProtKB-UniRule"/>
</dbReference>
<dbReference type="GO" id="GO:0002935">
    <property type="term" value="F:tRNA (adenine(37)-C2)-methyltransferase activity"/>
    <property type="evidence" value="ECO:0007669"/>
    <property type="project" value="UniProtKB-UniRule"/>
</dbReference>
<dbReference type="GO" id="GO:0000049">
    <property type="term" value="F:tRNA binding"/>
    <property type="evidence" value="ECO:0007669"/>
    <property type="project" value="UniProtKB-UniRule"/>
</dbReference>
<dbReference type="GO" id="GO:0070475">
    <property type="term" value="P:rRNA base methylation"/>
    <property type="evidence" value="ECO:0007669"/>
    <property type="project" value="UniProtKB-UniRule"/>
</dbReference>
<dbReference type="GO" id="GO:0030488">
    <property type="term" value="P:tRNA methylation"/>
    <property type="evidence" value="ECO:0007669"/>
    <property type="project" value="UniProtKB-UniRule"/>
</dbReference>
<dbReference type="CDD" id="cd01335">
    <property type="entry name" value="Radical_SAM"/>
    <property type="match status" value="1"/>
</dbReference>
<dbReference type="FunFam" id="1.10.150.530:FF:000001">
    <property type="entry name" value="Dual-specificity RNA methyltransferase RlmN"/>
    <property type="match status" value="1"/>
</dbReference>
<dbReference type="FunFam" id="3.20.20.70:FF:000008">
    <property type="entry name" value="Dual-specificity RNA methyltransferase RlmN"/>
    <property type="match status" value="1"/>
</dbReference>
<dbReference type="Gene3D" id="1.10.150.530">
    <property type="match status" value="1"/>
</dbReference>
<dbReference type="Gene3D" id="3.20.20.70">
    <property type="entry name" value="Aldolase class I"/>
    <property type="match status" value="1"/>
</dbReference>
<dbReference type="HAMAP" id="MF_01849">
    <property type="entry name" value="RNA_methyltr_RlmN"/>
    <property type="match status" value="1"/>
</dbReference>
<dbReference type="InterPro" id="IPR013785">
    <property type="entry name" value="Aldolase_TIM"/>
</dbReference>
<dbReference type="InterPro" id="IPR040072">
    <property type="entry name" value="Methyltransferase_A"/>
</dbReference>
<dbReference type="InterPro" id="IPR048641">
    <property type="entry name" value="RlmN_N"/>
</dbReference>
<dbReference type="InterPro" id="IPR027492">
    <property type="entry name" value="RNA_MTrfase_RlmN"/>
</dbReference>
<dbReference type="InterPro" id="IPR004383">
    <property type="entry name" value="rRNA_lsu_MTrfase_RlmN/Cfr"/>
</dbReference>
<dbReference type="InterPro" id="IPR007197">
    <property type="entry name" value="rSAM"/>
</dbReference>
<dbReference type="NCBIfam" id="NF008396">
    <property type="entry name" value="PRK11194.1"/>
    <property type="match status" value="1"/>
</dbReference>
<dbReference type="NCBIfam" id="TIGR00048">
    <property type="entry name" value="rRNA_mod_RlmN"/>
    <property type="match status" value="1"/>
</dbReference>
<dbReference type="PANTHER" id="PTHR30544">
    <property type="entry name" value="23S RRNA METHYLTRANSFERASE"/>
    <property type="match status" value="1"/>
</dbReference>
<dbReference type="PANTHER" id="PTHR30544:SF5">
    <property type="entry name" value="RADICAL SAM CORE DOMAIN-CONTAINING PROTEIN"/>
    <property type="match status" value="1"/>
</dbReference>
<dbReference type="Pfam" id="PF04055">
    <property type="entry name" value="Radical_SAM"/>
    <property type="match status" value="1"/>
</dbReference>
<dbReference type="Pfam" id="PF21016">
    <property type="entry name" value="RlmN_N"/>
    <property type="match status" value="1"/>
</dbReference>
<dbReference type="PIRSF" id="PIRSF006004">
    <property type="entry name" value="CHP00048"/>
    <property type="match status" value="1"/>
</dbReference>
<dbReference type="SFLD" id="SFLDF00275">
    <property type="entry name" value="adenosine_C2_methyltransferase"/>
    <property type="match status" value="1"/>
</dbReference>
<dbReference type="SFLD" id="SFLDG01062">
    <property type="entry name" value="methyltransferase_(Class_A)"/>
    <property type="match status" value="1"/>
</dbReference>
<dbReference type="SUPFAM" id="SSF102114">
    <property type="entry name" value="Radical SAM enzymes"/>
    <property type="match status" value="1"/>
</dbReference>
<dbReference type="PROSITE" id="PS51918">
    <property type="entry name" value="RADICAL_SAM"/>
    <property type="match status" value="1"/>
</dbReference>
<reference key="1">
    <citation type="journal article" date="2006" name="J. Bacteriol.">
        <title>Complete genome sequence of Yersinia pestis strains Antiqua and Nepal516: evidence of gene reduction in an emerging pathogen.</title>
        <authorList>
            <person name="Chain P.S.G."/>
            <person name="Hu P."/>
            <person name="Malfatti S.A."/>
            <person name="Radnedge L."/>
            <person name="Larimer F."/>
            <person name="Vergez L.M."/>
            <person name="Worsham P."/>
            <person name="Chu M.C."/>
            <person name="Andersen G.L."/>
        </authorList>
    </citation>
    <scope>NUCLEOTIDE SEQUENCE [LARGE SCALE GENOMIC DNA]</scope>
    <source>
        <strain>Antiqua</strain>
    </source>
</reference>
<keyword id="KW-0004">4Fe-4S</keyword>
<keyword id="KW-0963">Cytoplasm</keyword>
<keyword id="KW-1015">Disulfide bond</keyword>
<keyword id="KW-0408">Iron</keyword>
<keyword id="KW-0411">Iron-sulfur</keyword>
<keyword id="KW-0479">Metal-binding</keyword>
<keyword id="KW-0489">Methyltransferase</keyword>
<keyword id="KW-0698">rRNA processing</keyword>
<keyword id="KW-0949">S-adenosyl-L-methionine</keyword>
<keyword id="KW-0808">Transferase</keyword>
<keyword id="KW-0819">tRNA processing</keyword>
<gene>
    <name evidence="1" type="primary">rlmN</name>
    <name type="ordered locus">YPA_2322</name>
</gene>
<accession>Q1C5I5</accession>
<proteinExistence type="inferred from homology"/>
<organism>
    <name type="scientific">Yersinia pestis bv. Antiqua (strain Antiqua)</name>
    <dbReference type="NCBI Taxonomy" id="360102"/>
    <lineage>
        <taxon>Bacteria</taxon>
        <taxon>Pseudomonadati</taxon>
        <taxon>Pseudomonadota</taxon>
        <taxon>Gammaproteobacteria</taxon>
        <taxon>Enterobacterales</taxon>
        <taxon>Yersiniaceae</taxon>
        <taxon>Yersinia</taxon>
    </lineage>
</organism>
<feature type="chain" id="PRO_0000350541" description="Dual-specificity RNA methyltransferase RlmN">
    <location>
        <begin position="1"/>
        <end position="398"/>
    </location>
</feature>
<feature type="domain" description="Radical SAM core" evidence="2">
    <location>
        <begin position="125"/>
        <end position="364"/>
    </location>
</feature>
<feature type="active site" description="Proton acceptor" evidence="1">
    <location>
        <position position="119"/>
    </location>
</feature>
<feature type="active site" description="S-methylcysteine intermediate" evidence="1">
    <location>
        <position position="369"/>
    </location>
</feature>
<feature type="binding site" evidence="1">
    <location>
        <position position="139"/>
    </location>
    <ligand>
        <name>[4Fe-4S] cluster</name>
        <dbReference type="ChEBI" id="CHEBI:49883"/>
        <note>4Fe-4S-S-AdoMet</note>
    </ligand>
</feature>
<feature type="binding site" evidence="1">
    <location>
        <position position="143"/>
    </location>
    <ligand>
        <name>[4Fe-4S] cluster</name>
        <dbReference type="ChEBI" id="CHEBI:49883"/>
        <note>4Fe-4S-S-AdoMet</note>
    </ligand>
</feature>
<feature type="binding site" evidence="1">
    <location>
        <position position="146"/>
    </location>
    <ligand>
        <name>[4Fe-4S] cluster</name>
        <dbReference type="ChEBI" id="CHEBI:49883"/>
        <note>4Fe-4S-S-AdoMet</note>
    </ligand>
</feature>
<feature type="binding site" evidence="1">
    <location>
        <begin position="193"/>
        <end position="194"/>
    </location>
    <ligand>
        <name>S-adenosyl-L-methionine</name>
        <dbReference type="ChEBI" id="CHEBI:59789"/>
    </ligand>
</feature>
<feature type="binding site" evidence="1">
    <location>
        <position position="225"/>
    </location>
    <ligand>
        <name>S-adenosyl-L-methionine</name>
        <dbReference type="ChEBI" id="CHEBI:59789"/>
    </ligand>
</feature>
<feature type="binding site" evidence="1">
    <location>
        <begin position="247"/>
        <end position="249"/>
    </location>
    <ligand>
        <name>S-adenosyl-L-methionine</name>
        <dbReference type="ChEBI" id="CHEBI:59789"/>
    </ligand>
</feature>
<feature type="binding site" evidence="1">
    <location>
        <position position="326"/>
    </location>
    <ligand>
        <name>S-adenosyl-L-methionine</name>
        <dbReference type="ChEBI" id="CHEBI:59789"/>
    </ligand>
</feature>
<feature type="disulfide bond" description="(transient)" evidence="1">
    <location>
        <begin position="132"/>
        <end position="369"/>
    </location>
</feature>
<protein>
    <recommendedName>
        <fullName evidence="1">Dual-specificity RNA methyltransferase RlmN</fullName>
        <ecNumber evidence="1">2.1.1.192</ecNumber>
    </recommendedName>
    <alternativeName>
        <fullName evidence="1">23S rRNA (adenine(2503)-C(2))-methyltransferase</fullName>
    </alternativeName>
    <alternativeName>
        <fullName evidence="1">23S rRNA m2A2503 methyltransferase</fullName>
    </alternativeName>
    <alternativeName>
        <fullName evidence="1">Ribosomal RNA large subunit methyltransferase N</fullName>
    </alternativeName>
    <alternativeName>
        <fullName evidence="1">tRNA (adenine(37)-C(2))-methyltransferase</fullName>
    </alternativeName>
    <alternativeName>
        <fullName evidence="1">tRNA m2A37 methyltransferase</fullName>
    </alternativeName>
</protein>
<name>RLMN_YERPA</name>
<evidence type="ECO:0000255" key="1">
    <source>
        <dbReference type="HAMAP-Rule" id="MF_01849"/>
    </source>
</evidence>
<evidence type="ECO:0000255" key="2">
    <source>
        <dbReference type="PROSITE-ProRule" id="PRU01266"/>
    </source>
</evidence>
<comment type="function">
    <text evidence="1">Specifically methylates position 2 of adenine 2503 in 23S rRNA and position 2 of adenine 37 in tRNAs. m2A2503 modification seems to play a crucial role in the proofreading step occurring at the peptidyl transferase center and thus would serve to optimize ribosomal fidelity.</text>
</comment>
<comment type="catalytic activity">
    <reaction evidence="1">
        <text>adenosine(2503) in 23S rRNA + 2 reduced [2Fe-2S]-[ferredoxin] + 2 S-adenosyl-L-methionine = 2-methyladenosine(2503) in 23S rRNA + 5'-deoxyadenosine + L-methionine + 2 oxidized [2Fe-2S]-[ferredoxin] + S-adenosyl-L-homocysteine</text>
        <dbReference type="Rhea" id="RHEA:42916"/>
        <dbReference type="Rhea" id="RHEA-COMP:10000"/>
        <dbReference type="Rhea" id="RHEA-COMP:10001"/>
        <dbReference type="Rhea" id="RHEA-COMP:10152"/>
        <dbReference type="Rhea" id="RHEA-COMP:10282"/>
        <dbReference type="ChEBI" id="CHEBI:17319"/>
        <dbReference type="ChEBI" id="CHEBI:33737"/>
        <dbReference type="ChEBI" id="CHEBI:33738"/>
        <dbReference type="ChEBI" id="CHEBI:57844"/>
        <dbReference type="ChEBI" id="CHEBI:57856"/>
        <dbReference type="ChEBI" id="CHEBI:59789"/>
        <dbReference type="ChEBI" id="CHEBI:74411"/>
        <dbReference type="ChEBI" id="CHEBI:74497"/>
        <dbReference type="EC" id="2.1.1.192"/>
    </reaction>
</comment>
<comment type="catalytic activity">
    <reaction evidence="1">
        <text>adenosine(37) in tRNA + 2 reduced [2Fe-2S]-[ferredoxin] + 2 S-adenosyl-L-methionine = 2-methyladenosine(37) in tRNA + 5'-deoxyadenosine + L-methionine + 2 oxidized [2Fe-2S]-[ferredoxin] + S-adenosyl-L-homocysteine</text>
        <dbReference type="Rhea" id="RHEA:43332"/>
        <dbReference type="Rhea" id="RHEA-COMP:10000"/>
        <dbReference type="Rhea" id="RHEA-COMP:10001"/>
        <dbReference type="Rhea" id="RHEA-COMP:10162"/>
        <dbReference type="Rhea" id="RHEA-COMP:10485"/>
        <dbReference type="ChEBI" id="CHEBI:17319"/>
        <dbReference type="ChEBI" id="CHEBI:33737"/>
        <dbReference type="ChEBI" id="CHEBI:33738"/>
        <dbReference type="ChEBI" id="CHEBI:57844"/>
        <dbReference type="ChEBI" id="CHEBI:57856"/>
        <dbReference type="ChEBI" id="CHEBI:59789"/>
        <dbReference type="ChEBI" id="CHEBI:74411"/>
        <dbReference type="ChEBI" id="CHEBI:74497"/>
        <dbReference type="EC" id="2.1.1.192"/>
    </reaction>
</comment>
<comment type="cofactor">
    <cofactor evidence="1">
        <name>[4Fe-4S] cluster</name>
        <dbReference type="ChEBI" id="CHEBI:49883"/>
    </cofactor>
    <text evidence="1">Binds 1 [4Fe-4S] cluster. The cluster is coordinated with 3 cysteines and an exchangeable S-adenosyl-L-methionine.</text>
</comment>
<comment type="subcellular location">
    <subcellularLocation>
        <location evidence="1">Cytoplasm</location>
    </subcellularLocation>
</comment>
<comment type="miscellaneous">
    <text evidence="1">Reaction proceeds by a ping-pong mechanism involving intermediate methylation of a conserved cysteine residue.</text>
</comment>
<comment type="similarity">
    <text evidence="1">Belongs to the radical SAM superfamily. RlmN family.</text>
</comment>